<protein>
    <recommendedName>
        <fullName evidence="1">tRNA uridine 5-carboxymethylaminomethyl modification enzyme MnmG</fullName>
    </recommendedName>
    <alternativeName>
        <fullName evidence="1">Glucose-inhibited division protein A</fullName>
    </alternativeName>
</protein>
<accession>B1AI24</accession>
<gene>
    <name evidence="1" type="primary">mnmG</name>
    <name evidence="1" type="synonym">gidA</name>
    <name type="ordered locus">UPA3_0038</name>
</gene>
<reference key="1">
    <citation type="submission" date="2008-02" db="EMBL/GenBank/DDBJ databases">
        <title>Genome sequence of Ureaplasma parvum serovar 3.</title>
        <authorList>
            <person name="Methe B.A."/>
            <person name="Glass J."/>
            <person name="Waites K."/>
            <person name="Shrivastava S."/>
        </authorList>
    </citation>
    <scope>NUCLEOTIDE SEQUENCE [LARGE SCALE GENOMIC DNA]</scope>
    <source>
        <strain>ATCC 27815 / 27 / NCTC 11736</strain>
    </source>
</reference>
<comment type="function">
    <text evidence="1">NAD-binding protein involved in the addition of a carboxymethylaminomethyl (cmnm) group at the wobble position (U34) of certain tRNAs, forming tRNA-cmnm(5)s(2)U34.</text>
</comment>
<comment type="cofactor">
    <cofactor evidence="1">
        <name>FAD</name>
        <dbReference type="ChEBI" id="CHEBI:57692"/>
    </cofactor>
</comment>
<comment type="subunit">
    <text evidence="1">Homodimer. Heterotetramer of two MnmE and two MnmG subunits.</text>
</comment>
<comment type="subcellular location">
    <subcellularLocation>
        <location evidence="1">Cytoplasm</location>
    </subcellularLocation>
</comment>
<comment type="similarity">
    <text evidence="1">Belongs to the MnmG family.</text>
</comment>
<dbReference type="EMBL" id="CP000942">
    <property type="protein sequence ID" value="ACA32872.1"/>
    <property type="molecule type" value="Genomic_DNA"/>
</dbReference>
<dbReference type="RefSeq" id="WP_010891662.1">
    <property type="nucleotide sequence ID" value="NC_010503.1"/>
</dbReference>
<dbReference type="SMR" id="B1AI24"/>
<dbReference type="GeneID" id="29672170"/>
<dbReference type="KEGG" id="upa:UPA3_0038"/>
<dbReference type="HOGENOM" id="CLU_007831_2_2_14"/>
<dbReference type="Proteomes" id="UP000002162">
    <property type="component" value="Chromosome"/>
</dbReference>
<dbReference type="GO" id="GO:0005829">
    <property type="term" value="C:cytosol"/>
    <property type="evidence" value="ECO:0007669"/>
    <property type="project" value="TreeGrafter"/>
</dbReference>
<dbReference type="GO" id="GO:0050660">
    <property type="term" value="F:flavin adenine dinucleotide binding"/>
    <property type="evidence" value="ECO:0007669"/>
    <property type="project" value="UniProtKB-UniRule"/>
</dbReference>
<dbReference type="GO" id="GO:0030488">
    <property type="term" value="P:tRNA methylation"/>
    <property type="evidence" value="ECO:0007669"/>
    <property type="project" value="TreeGrafter"/>
</dbReference>
<dbReference type="GO" id="GO:0002098">
    <property type="term" value="P:tRNA wobble uridine modification"/>
    <property type="evidence" value="ECO:0007669"/>
    <property type="project" value="InterPro"/>
</dbReference>
<dbReference type="FunFam" id="3.50.50.60:FF:000002">
    <property type="entry name" value="tRNA uridine 5-carboxymethylaminomethyl modification enzyme MnmG"/>
    <property type="match status" value="1"/>
</dbReference>
<dbReference type="Gene3D" id="3.50.50.60">
    <property type="entry name" value="FAD/NAD(P)-binding domain"/>
    <property type="match status" value="2"/>
</dbReference>
<dbReference type="Gene3D" id="1.10.150.570">
    <property type="entry name" value="GidA associated domain, C-terminal subdomain"/>
    <property type="match status" value="1"/>
</dbReference>
<dbReference type="Gene3D" id="1.10.10.1800">
    <property type="entry name" value="tRNA uridine 5-carboxymethylaminomethyl modification enzyme MnmG/GidA"/>
    <property type="match status" value="1"/>
</dbReference>
<dbReference type="HAMAP" id="MF_00129">
    <property type="entry name" value="MnmG_GidA"/>
    <property type="match status" value="1"/>
</dbReference>
<dbReference type="InterPro" id="IPR036188">
    <property type="entry name" value="FAD/NAD-bd_sf"/>
</dbReference>
<dbReference type="InterPro" id="IPR049312">
    <property type="entry name" value="GIDA_C_N"/>
</dbReference>
<dbReference type="InterPro" id="IPR004416">
    <property type="entry name" value="MnmG"/>
</dbReference>
<dbReference type="InterPro" id="IPR002218">
    <property type="entry name" value="MnmG-rel"/>
</dbReference>
<dbReference type="InterPro" id="IPR020595">
    <property type="entry name" value="MnmG-rel_CS"/>
</dbReference>
<dbReference type="InterPro" id="IPR026904">
    <property type="entry name" value="MnmG_C"/>
</dbReference>
<dbReference type="InterPro" id="IPR047001">
    <property type="entry name" value="MnmG_C_subdom"/>
</dbReference>
<dbReference type="InterPro" id="IPR044920">
    <property type="entry name" value="MnmG_C_subdom_sf"/>
</dbReference>
<dbReference type="InterPro" id="IPR040131">
    <property type="entry name" value="MnmG_N"/>
</dbReference>
<dbReference type="NCBIfam" id="TIGR00136">
    <property type="entry name" value="mnmG_gidA"/>
    <property type="match status" value="1"/>
</dbReference>
<dbReference type="PANTHER" id="PTHR11806">
    <property type="entry name" value="GLUCOSE INHIBITED DIVISION PROTEIN A"/>
    <property type="match status" value="1"/>
</dbReference>
<dbReference type="PANTHER" id="PTHR11806:SF0">
    <property type="entry name" value="PROTEIN MTO1 HOMOLOG, MITOCHONDRIAL"/>
    <property type="match status" value="1"/>
</dbReference>
<dbReference type="Pfam" id="PF01134">
    <property type="entry name" value="GIDA"/>
    <property type="match status" value="1"/>
</dbReference>
<dbReference type="Pfam" id="PF21680">
    <property type="entry name" value="GIDA_C_1st"/>
    <property type="match status" value="1"/>
</dbReference>
<dbReference type="Pfam" id="PF13932">
    <property type="entry name" value="SAM_GIDA_C"/>
    <property type="match status" value="1"/>
</dbReference>
<dbReference type="SMART" id="SM01228">
    <property type="entry name" value="GIDA_assoc_3"/>
    <property type="match status" value="1"/>
</dbReference>
<dbReference type="SUPFAM" id="SSF51905">
    <property type="entry name" value="FAD/NAD(P)-binding domain"/>
    <property type="match status" value="1"/>
</dbReference>
<dbReference type="PROSITE" id="PS01280">
    <property type="entry name" value="GIDA_1"/>
    <property type="match status" value="1"/>
</dbReference>
<dbReference type="PROSITE" id="PS01281">
    <property type="entry name" value="GIDA_2"/>
    <property type="match status" value="1"/>
</dbReference>
<feature type="chain" id="PRO_1000076338" description="tRNA uridine 5-carboxymethylaminomethyl modification enzyme MnmG">
    <location>
        <begin position="1"/>
        <end position="614"/>
    </location>
</feature>
<feature type="binding site" evidence="1">
    <location>
        <begin position="10"/>
        <end position="15"/>
    </location>
    <ligand>
        <name>FAD</name>
        <dbReference type="ChEBI" id="CHEBI:57692"/>
    </ligand>
</feature>
<feature type="binding site" evidence="1">
    <location>
        <begin position="271"/>
        <end position="285"/>
    </location>
    <ligand>
        <name>NAD(+)</name>
        <dbReference type="ChEBI" id="CHEBI:57540"/>
    </ligand>
</feature>
<keyword id="KW-0963">Cytoplasm</keyword>
<keyword id="KW-0274">FAD</keyword>
<keyword id="KW-0285">Flavoprotein</keyword>
<keyword id="KW-0520">NAD</keyword>
<keyword id="KW-0819">tRNA processing</keyword>
<name>MNMG_UREP2</name>
<organism>
    <name type="scientific">Ureaplasma parvum serovar 3 (strain ATCC 27815 / 27 / NCTC 11736)</name>
    <dbReference type="NCBI Taxonomy" id="505682"/>
    <lineage>
        <taxon>Bacteria</taxon>
        <taxon>Bacillati</taxon>
        <taxon>Mycoplasmatota</taxon>
        <taxon>Mycoplasmoidales</taxon>
        <taxon>Mycoplasmoidaceae</taxon>
        <taxon>Ureaplasma</taxon>
    </lineage>
</organism>
<evidence type="ECO:0000255" key="1">
    <source>
        <dbReference type="HAMAP-Rule" id="MF_00129"/>
    </source>
</evidence>
<sequence length="614" mass="69193">MKKYDVIVIGAGHAGLEAAFATSNLNLQTALITLDEKGIGMMPCNPSIGGPAKGIVTREIDALGGIQGKAADATTMQMKILNSSKGPGVWAIRAQIDKIAYQRWFKQQIKQQKNLDLIIAEVSDLLVENNIVKGVVLSDQKIIQADYVIITTGTYLKSITHRGSVCVDEGADGTKNAKFLSDALVKLGFELIRLKTGTPARIKKDSIDFTNMILEPGTNQKIAFSHYHPVYKPYDEQLPCHIIYTNEQTHQIIRENLNKSAMYGGMISGIGPRYCPSIEDKIVKFSEKPRHQIFVEPESYELDSMYLGGFSTSMPIDVQEKMIRSLPGLENCEILKYAYAIEYDAIDPTQLYPSLESKLVNNLFFAGQINGTSGYEEAAAQGLMAAINVNQKYQNKEPVILGRDQAYIGVMIDDIVTKGVVEPYRLLTSRAEHRLALRNDNADDRLMKIGFEIGLLKPEVYDQYLNNLKQIKEILNWLKTTTVGQIDDLKFTTLKTNSYLIDYLKRPEIKLNDLLIYCPIKIEDEQIINKVQIQVKFEGYIKNQEENLKQLKRLNNIKLHAIVDYKEVPNISLETIDKLNKIKPLDLEQASRISGVNLTDIAMIKYYLERIKND</sequence>
<proteinExistence type="inferred from homology"/>